<comment type="function">
    <text evidence="1">Usually encoded in the trnK tRNA gene intron. Probably assists in splicing its own and other chloroplast group II introns.</text>
</comment>
<comment type="subcellular location">
    <subcellularLocation>
        <location>Plastid</location>
        <location>Chloroplast</location>
    </subcellularLocation>
</comment>
<comment type="similarity">
    <text evidence="1">Belongs to the intron maturase 2 family. MatK subfamily.</text>
</comment>
<proteinExistence type="inferred from homology"/>
<evidence type="ECO:0000255" key="1">
    <source>
        <dbReference type="HAMAP-Rule" id="MF_01390"/>
    </source>
</evidence>
<reference key="1">
    <citation type="journal article" date="1996" name="Opera Bot. Belg.">
        <title>A phylogenetic analysis of Apocynaceae s.str. and some related taxa in Gentianales: a multidiciplinary approach.</title>
        <authorList>
            <person name="Endress M.E."/>
            <person name="Sennblad B."/>
            <person name="Nilsson S."/>
            <person name="Civeyrel L."/>
            <person name="Chase M.W."/>
            <person name="Huysmans S."/>
            <person name="Grafstroem E."/>
            <person name="Bremer B."/>
        </authorList>
    </citation>
    <scope>NUCLEOTIDE SEQUENCE [GENOMIC DNA]</scope>
</reference>
<accession>O09410</accession>
<keyword id="KW-0150">Chloroplast</keyword>
<keyword id="KW-0507">mRNA processing</keyword>
<keyword id="KW-0934">Plastid</keyword>
<keyword id="KW-0694">RNA-binding</keyword>
<keyword id="KW-0819">tRNA processing</keyword>
<organism>
    <name type="scientific">Apocynum androsaemifolium</name>
    <name type="common">Spreading dogbane</name>
    <dbReference type="NCBI Taxonomy" id="61254"/>
    <lineage>
        <taxon>Eukaryota</taxon>
        <taxon>Viridiplantae</taxon>
        <taxon>Streptophyta</taxon>
        <taxon>Embryophyta</taxon>
        <taxon>Tracheophyta</taxon>
        <taxon>Spermatophyta</taxon>
        <taxon>Magnoliopsida</taxon>
        <taxon>eudicotyledons</taxon>
        <taxon>Gunneridae</taxon>
        <taxon>Pentapetalae</taxon>
        <taxon>asterids</taxon>
        <taxon>lamiids</taxon>
        <taxon>Gentianales</taxon>
        <taxon>Apocynaceae</taxon>
        <taxon>Apocynoideae</taxon>
        <taxon>Apocyneae</taxon>
        <taxon>Apocyinae</taxon>
        <taxon>Apocynum</taxon>
    </lineage>
</organism>
<geneLocation type="chloroplast"/>
<protein>
    <recommendedName>
        <fullName evidence="1">Maturase K</fullName>
    </recommendedName>
    <alternativeName>
        <fullName evidence="1">Intron maturase</fullName>
    </alternativeName>
</protein>
<feature type="chain" id="PRO_0000143242" description="Maturase K">
    <location>
        <begin position="1"/>
        <end position="505"/>
    </location>
</feature>
<gene>
    <name evidence="1" type="primary">matK</name>
</gene>
<name>MATK_APOAN</name>
<dbReference type="EMBL" id="Z70183">
    <property type="protein sequence ID" value="CAA94072.1"/>
    <property type="molecule type" value="Genomic_DNA"/>
</dbReference>
<dbReference type="GO" id="GO:0009507">
    <property type="term" value="C:chloroplast"/>
    <property type="evidence" value="ECO:0007669"/>
    <property type="project" value="UniProtKB-SubCell"/>
</dbReference>
<dbReference type="GO" id="GO:0003723">
    <property type="term" value="F:RNA binding"/>
    <property type="evidence" value="ECO:0007669"/>
    <property type="project" value="UniProtKB-KW"/>
</dbReference>
<dbReference type="GO" id="GO:0006397">
    <property type="term" value="P:mRNA processing"/>
    <property type="evidence" value="ECO:0007669"/>
    <property type="project" value="UniProtKB-KW"/>
</dbReference>
<dbReference type="GO" id="GO:0008380">
    <property type="term" value="P:RNA splicing"/>
    <property type="evidence" value="ECO:0007669"/>
    <property type="project" value="UniProtKB-UniRule"/>
</dbReference>
<dbReference type="GO" id="GO:0008033">
    <property type="term" value="P:tRNA processing"/>
    <property type="evidence" value="ECO:0007669"/>
    <property type="project" value="UniProtKB-KW"/>
</dbReference>
<dbReference type="HAMAP" id="MF_01390">
    <property type="entry name" value="MatK"/>
    <property type="match status" value="1"/>
</dbReference>
<dbReference type="InterPro" id="IPR024937">
    <property type="entry name" value="Domain_X"/>
</dbReference>
<dbReference type="InterPro" id="IPR002866">
    <property type="entry name" value="Maturase_MatK"/>
</dbReference>
<dbReference type="InterPro" id="IPR024942">
    <property type="entry name" value="Maturase_MatK_N"/>
</dbReference>
<dbReference type="PANTHER" id="PTHR34811">
    <property type="entry name" value="MATURASE K"/>
    <property type="match status" value="1"/>
</dbReference>
<dbReference type="PANTHER" id="PTHR34811:SF1">
    <property type="entry name" value="MATURASE K"/>
    <property type="match status" value="1"/>
</dbReference>
<dbReference type="Pfam" id="PF01348">
    <property type="entry name" value="Intron_maturas2"/>
    <property type="match status" value="1"/>
</dbReference>
<dbReference type="Pfam" id="PF01824">
    <property type="entry name" value="MatK_N"/>
    <property type="match status" value="1"/>
</dbReference>
<sequence>MEEIQRYLQLDRSQQPSFLYPLIFQEYIYALAHGHNLNRAILLENPGYDNKSSFLIVKRLITRMYQQNHFLTSANDSSQNPFIGRNKNLYSKMISEGFSFIVEIPFSMRLISSEERKGIFQSHNLRSIHSIFPFLEDNFSHFNLMLDIQIPHPVHLEILVQTLRYWVKDAPSLHLLRFFLREYCNCNKIISTKKPGFLFLTKKNQRLFFLLYNFYVCEYESIFVFLHTQSSHLRPTSFGVFRERIYFYGKIEHFAEVFAKDFPTNLCLFKYPFMHYVRYQGKSILLSRGTALLMNKWKSYLVNFWQCNFDLWVHSRRAYIKQVYNYSLDFMGYLSIVRQTPLTVRSQMLKNAFLIKNPINKLDTLVPIIPLIGSFAKAKFCNLLGHPISKPVRTDLSDSDIMDRFGRICRNLSHYYSGSSKKKSLYRIKYILRLSCAKTLARKHKSTVRAFLKRLGSEFLEEFFMSEEEVFSLTFPRVYSLFLGVYRSRIWYLDITCINDLANQQ</sequence>